<dbReference type="EMBL" id="X62333">
    <property type="protein sequence ID" value="CAA44207.1"/>
    <property type="molecule type" value="Genomic_DNA"/>
</dbReference>
<dbReference type="PIR" id="S35908">
    <property type="entry name" value="S35908"/>
</dbReference>
<dbReference type="SMR" id="Q06716"/>
<dbReference type="MEROPS" id="X20.001"/>
<dbReference type="GO" id="GO:0005737">
    <property type="term" value="C:cytoplasm"/>
    <property type="evidence" value="ECO:0007669"/>
    <property type="project" value="TreeGrafter"/>
</dbReference>
<dbReference type="GO" id="GO:0005524">
    <property type="term" value="F:ATP binding"/>
    <property type="evidence" value="ECO:0007669"/>
    <property type="project" value="UniProtKB-KW"/>
</dbReference>
<dbReference type="GO" id="GO:0016887">
    <property type="term" value="F:ATP hydrolysis activity"/>
    <property type="evidence" value="ECO:0007669"/>
    <property type="project" value="InterPro"/>
</dbReference>
<dbReference type="GO" id="GO:0034605">
    <property type="term" value="P:cellular response to heat"/>
    <property type="evidence" value="ECO:0007669"/>
    <property type="project" value="TreeGrafter"/>
</dbReference>
<dbReference type="CDD" id="cd00009">
    <property type="entry name" value="AAA"/>
    <property type="match status" value="1"/>
</dbReference>
<dbReference type="CDD" id="cd19499">
    <property type="entry name" value="RecA-like_ClpB_Hsp104-like"/>
    <property type="match status" value="1"/>
</dbReference>
<dbReference type="FunFam" id="3.40.50.300:FF:000025">
    <property type="entry name" value="ATP-dependent Clp protease subunit"/>
    <property type="match status" value="1"/>
</dbReference>
<dbReference type="Gene3D" id="1.10.8.60">
    <property type="match status" value="2"/>
</dbReference>
<dbReference type="Gene3D" id="3.40.50.300">
    <property type="entry name" value="P-loop containing nucleotide triphosphate hydrolases"/>
    <property type="match status" value="2"/>
</dbReference>
<dbReference type="Gene3D" id="4.10.860.10">
    <property type="entry name" value="UVR domain"/>
    <property type="match status" value="1"/>
</dbReference>
<dbReference type="InterPro" id="IPR003593">
    <property type="entry name" value="AAA+_ATPase"/>
</dbReference>
<dbReference type="InterPro" id="IPR003959">
    <property type="entry name" value="ATPase_AAA_core"/>
</dbReference>
<dbReference type="InterPro" id="IPR019489">
    <property type="entry name" value="Clp_ATPase_C"/>
</dbReference>
<dbReference type="InterPro" id="IPR001270">
    <property type="entry name" value="ClpA/B"/>
</dbReference>
<dbReference type="InterPro" id="IPR028299">
    <property type="entry name" value="ClpA/B_CS2"/>
</dbReference>
<dbReference type="InterPro" id="IPR041546">
    <property type="entry name" value="ClpA/ClpB_AAA_lid"/>
</dbReference>
<dbReference type="InterPro" id="IPR050130">
    <property type="entry name" value="ClpA_ClpB"/>
</dbReference>
<dbReference type="InterPro" id="IPR027417">
    <property type="entry name" value="P-loop_NTPase"/>
</dbReference>
<dbReference type="PANTHER" id="PTHR11638">
    <property type="entry name" value="ATP-DEPENDENT CLP PROTEASE"/>
    <property type="match status" value="1"/>
</dbReference>
<dbReference type="PANTHER" id="PTHR11638:SF188">
    <property type="entry name" value="ATP-DEPENDENT CLP PROTEASE ATP-BINDING SUBUNIT CLPL"/>
    <property type="match status" value="1"/>
</dbReference>
<dbReference type="Pfam" id="PF00004">
    <property type="entry name" value="AAA"/>
    <property type="match status" value="1"/>
</dbReference>
<dbReference type="Pfam" id="PF07724">
    <property type="entry name" value="AAA_2"/>
    <property type="match status" value="1"/>
</dbReference>
<dbReference type="Pfam" id="PF17871">
    <property type="entry name" value="AAA_lid_9"/>
    <property type="match status" value="1"/>
</dbReference>
<dbReference type="Pfam" id="PF10431">
    <property type="entry name" value="ClpB_D2-small"/>
    <property type="match status" value="1"/>
</dbReference>
<dbReference type="PRINTS" id="PR00300">
    <property type="entry name" value="CLPPROTEASEA"/>
</dbReference>
<dbReference type="SMART" id="SM00382">
    <property type="entry name" value="AAA"/>
    <property type="match status" value="2"/>
</dbReference>
<dbReference type="SMART" id="SM01086">
    <property type="entry name" value="ClpB_D2-small"/>
    <property type="match status" value="1"/>
</dbReference>
<dbReference type="SUPFAM" id="SSF52540">
    <property type="entry name" value="P-loop containing nucleoside triphosphate hydrolases"/>
    <property type="match status" value="2"/>
</dbReference>
<dbReference type="PROSITE" id="PS00871">
    <property type="entry name" value="CLPAB_2"/>
    <property type="match status" value="1"/>
</dbReference>
<sequence length="763" mass="86019">MKLISLLFKQISVVILIDSISTLPSDTEKLCYNSVIVLKLSWSLTLHIQIFMEVWQYGKFQWNDPFFNNDMDDVFNQLFRRMDNQNSEVRGISLMDNRCHRMSLLNTEQLASYPKIIKQWKYLKMVNRLLKKEGFIEKLGTNLTEQARDGLLDPVIDRENEIQKPAQKFCRRRKKNPLLVGESGVGKTAVVEGLAQRIVAGKVPETIQDKEIYSIDLSSLEAGTQYRGSFEENIKQLVEEVKAAGNIILFIDEIHQILGTGALAGEEVKGLADIIKPLLCHVAKLSVIGATTQDEYRNTILKNAALARRFNDVVINEPTAADTLRILQGIKELYEKHHHVVLPDDEKKAAVDYSIKYIHNRHLPDKAIDLIDDCGSFSGKNSQTDVETLDQRLKNKRQLRRPAIKSEDFAKAADIKRVDRGTKQKIKKTHQKEKITATIDDVAQSVERLTGIPVSDMGANDIEHLKNLDKRLKVMVIGEDEAVKMVAKAIRRNRAGFSEGDQPKGSFLFVGPTGVGKTELSQALALDMFGNENALFGIDMSEYADRTAVSKLIGTSAGYVGYEDNANTLTERVRRNPYSVILLDEIEKADPQVLTLLLQVMDDGRLTDGQGSVIDFRNTIIIMTSNAGFGNEALSGDKQRVQSLMDKLAPFFAQNFRPEFRNRLDNIVEFSHLTKQDLSQIVDLMLADVQKTLAKKSIKLEVTKAAKDWLMEQGYDEAMGARPLRRVIEQQIRDKVTDFYLDHLDVKNLKADLVDAEIVISAA</sequence>
<keyword id="KW-0067">ATP-binding</keyword>
<keyword id="KW-0143">Chaperone</keyword>
<keyword id="KW-0547">Nucleotide-binding</keyword>
<keyword id="KW-0614">Plasmid</keyword>
<keyword id="KW-0677">Repeat</keyword>
<reference key="1">
    <citation type="journal article" date="1993" name="Mol. Microbiol.">
        <title>Two genes present on a transposon-like structure in Lactococcus lactis are involved in a Clp-family proteolytic activity.</title>
        <authorList>
            <person name="Huang D.C."/>
            <person name="Huang X.F."/>
            <person name="Novel G."/>
            <person name="Novel M."/>
        </authorList>
    </citation>
    <scope>NUCLEOTIDE SEQUENCE [GENOMIC DNA]</scope>
    <source>
        <strain>CNRZ 270</strain>
    </source>
</reference>
<organism>
    <name type="scientific">Lactococcus lactis subsp. lactis</name>
    <name type="common">Streptococcus lactis</name>
    <dbReference type="NCBI Taxonomy" id="1360"/>
    <lineage>
        <taxon>Bacteria</taxon>
        <taxon>Bacillati</taxon>
        <taxon>Bacillota</taxon>
        <taxon>Bacilli</taxon>
        <taxon>Lactobacillales</taxon>
        <taxon>Streptococcaceae</taxon>
        <taxon>Lactococcus</taxon>
    </lineage>
</organism>
<protein>
    <recommendedName>
        <fullName>ATP-dependent Clp protease ATP-binding subunit ClpL</fullName>
    </recommendedName>
</protein>
<feature type="chain" id="PRO_0000191233" description="ATP-dependent Clp protease ATP-binding subunit ClpL">
    <location>
        <begin position="1"/>
        <end position="763"/>
    </location>
</feature>
<feature type="region of interest" description="I">
    <location>
        <begin position="136"/>
        <end position="386"/>
    </location>
</feature>
<feature type="region of interest" description="II">
    <location>
        <begin position="437"/>
        <end position="629"/>
    </location>
</feature>
<feature type="binding site" evidence="1">
    <location>
        <begin position="181"/>
        <end position="188"/>
    </location>
    <ligand>
        <name>ATP</name>
        <dbReference type="ChEBI" id="CHEBI:30616"/>
    </ligand>
</feature>
<feature type="binding site" evidence="1">
    <location>
        <begin position="511"/>
        <end position="518"/>
    </location>
    <ligand>
        <name>ATP</name>
        <dbReference type="ChEBI" id="CHEBI:30616"/>
    </ligand>
</feature>
<evidence type="ECO:0000255" key="1"/>
<evidence type="ECO:0000305" key="2"/>
<accession>Q06716</accession>
<geneLocation type="plasmid">
    <name>pUCL22</name>
</geneLocation>
<gene>
    <name type="primary">clpL</name>
</gene>
<name>CLPL_LACLL</name>
<comment type="function">
    <text>Could be the ATP-dependent specificity component of an ATP-dependent protease.</text>
</comment>
<comment type="similarity">
    <text evidence="2">Belongs to the ClpA/ClpB family.</text>
</comment>
<proteinExistence type="inferred from homology"/>